<keyword id="KW-0929">Antimicrobial</keyword>
<keyword id="KW-0119">Carbohydrate metabolism</keyword>
<keyword id="KW-0146">Chitin degradation</keyword>
<keyword id="KW-0147">Chitin-binding</keyword>
<keyword id="KW-0903">Direct protein sequencing</keyword>
<keyword id="KW-1015">Disulfide bond</keyword>
<keyword id="KW-0295">Fungicide</keyword>
<keyword id="KW-0326">Glycosidase</keyword>
<keyword id="KW-0378">Hydrolase</keyword>
<keyword id="KW-0611">Plant defense</keyword>
<keyword id="KW-0624">Polysaccharide degradation</keyword>
<keyword id="KW-0732">Signal</keyword>
<feature type="signal peptide" evidence="7 8 9">
    <location>
        <begin position="1"/>
        <end position="19"/>
    </location>
</feature>
<feature type="chain" id="PRO_0000042670" description="Basic endochitinase A" evidence="7">
    <location>
        <begin position="20"/>
        <end position="321"/>
    </location>
</feature>
<feature type="domain" description="Chitin-binding type-1" evidence="3">
    <location>
        <begin position="20"/>
        <end position="60"/>
    </location>
</feature>
<feature type="region of interest" description="Hinge region (Gly/Pro/Thr-rich)" evidence="2">
    <location>
        <begin position="62"/>
        <end position="79"/>
    </location>
</feature>
<feature type="region of interest" description="Catalytic" evidence="2">
    <location>
        <begin position="80"/>
        <end position="321"/>
    </location>
</feature>
<feature type="active site" description="Proton donor" evidence="1">
    <location>
        <position position="145"/>
    </location>
</feature>
<feature type="disulfide bond" evidence="3 4">
    <location>
        <begin position="22"/>
        <end position="37"/>
    </location>
</feature>
<feature type="disulfide bond" evidence="3 4">
    <location>
        <begin position="31"/>
        <end position="43"/>
    </location>
</feature>
<feature type="disulfide bond" evidence="3 4">
    <location>
        <begin position="34"/>
        <end position="61"/>
    </location>
</feature>
<feature type="disulfide bond" evidence="3 4">
    <location>
        <begin position="36"/>
        <end position="50"/>
    </location>
</feature>
<feature type="disulfide bond" evidence="3 4">
    <location>
        <begin position="54"/>
        <end position="58"/>
    </location>
</feature>
<feature type="disulfide bond" evidence="3 4">
    <location>
        <begin position="101"/>
        <end position="163"/>
    </location>
</feature>
<feature type="disulfide bond" evidence="3 4">
    <location>
        <begin position="175"/>
        <end position="183"/>
    </location>
</feature>
<feature type="disulfide bond" evidence="3 4">
    <location>
        <begin position="301"/>
        <end position="314"/>
    </location>
</feature>
<feature type="mutagenesis site" description="Reduces chitinase activity towards soluble chitin to 65.5% and towards insoluble chitin. Reduces chitin-binding activity and anti-fungal activity." evidence="7">
    <original>W</original>
    <variation>A</variation>
    <location>
        <position position="42"/>
    </location>
</feature>
<feature type="mutagenesis site" description="Abolishes chitinase activity towards insoluble and soluble chitin. Abolishes chitin-binding activity and anti-fungal activity." evidence="7">
    <original>E</original>
    <variation>Q</variation>
    <location>
        <position position="145"/>
    </location>
</feature>
<feature type="sequence conflict" description="In Ref. 2; AA sequence." evidence="10" ref="2">
    <original>R</original>
    <variation>G</variation>
    <location>
        <position position="305"/>
    </location>
</feature>
<proteinExistence type="evidence at protein level"/>
<gene>
    <name evidence="11" type="primary">rsca</name>
</gene>
<name>CHIA_SECCE</name>
<accession>Q9FRV1</accession>
<sequence>MGAFALFAVLAMAVTMAVAEQCGSQAGGATCPNCLCCSRFGWCGSTSDYCGDGCQSQCAGCGGGGTPVTPTPTPSGGGGVSSIVSRALFDRMLLHRNDGACQAKGFYTYDAFVAAAGAFPGFGTTGSTDTRKREVAAFLAQTSHETTGGWATAPDGAFAWGYCFKQERGATSNYCTPSAQWPCAPGKSYYGRGPIQLSHNYNYGPAGRAIGVDLLRNPDLVATDPTVSFKTAMWFWMTAQAPKPSSHAVITGQWSPSGTDRAAGRVPGFGVITNIVNGGIECGHGQDSRVADRIGFYKRYCDILRVGYGNNLDCYNQRPFA</sequence>
<dbReference type="EC" id="3.2.1.14"/>
<dbReference type="EMBL" id="AB051578">
    <property type="protein sequence ID" value="BAB18519.1"/>
    <property type="molecule type" value="mRNA"/>
</dbReference>
<dbReference type="PIR" id="JC2071">
    <property type="entry name" value="JC2071"/>
</dbReference>
<dbReference type="SMR" id="Q9FRV1"/>
<dbReference type="CAZy" id="CBM18">
    <property type="family name" value="Carbohydrate-Binding Module Family 18"/>
</dbReference>
<dbReference type="CAZy" id="GH19">
    <property type="family name" value="Glycoside Hydrolase Family 19"/>
</dbReference>
<dbReference type="BRENDA" id="3.2.1.14">
    <property type="organism ID" value="5654"/>
</dbReference>
<dbReference type="GO" id="GO:0005576">
    <property type="term" value="C:extracellular region"/>
    <property type="evidence" value="ECO:0000305"/>
    <property type="project" value="UniProtKB"/>
</dbReference>
<dbReference type="GO" id="GO:0008061">
    <property type="term" value="F:chitin binding"/>
    <property type="evidence" value="ECO:0000314"/>
    <property type="project" value="UniProtKB"/>
</dbReference>
<dbReference type="GO" id="GO:0004568">
    <property type="term" value="F:chitinase activity"/>
    <property type="evidence" value="ECO:0000314"/>
    <property type="project" value="UniProtKB"/>
</dbReference>
<dbReference type="GO" id="GO:0008843">
    <property type="term" value="F:endochitinase activity"/>
    <property type="evidence" value="ECO:0007669"/>
    <property type="project" value="UniProtKB-EC"/>
</dbReference>
<dbReference type="GO" id="GO:0016998">
    <property type="term" value="P:cell wall macromolecule catabolic process"/>
    <property type="evidence" value="ECO:0000314"/>
    <property type="project" value="UniProtKB"/>
</dbReference>
<dbReference type="GO" id="GO:0006032">
    <property type="term" value="P:chitin catabolic process"/>
    <property type="evidence" value="ECO:0007669"/>
    <property type="project" value="UniProtKB-KW"/>
</dbReference>
<dbReference type="GO" id="GO:0050832">
    <property type="term" value="P:defense response to fungus"/>
    <property type="evidence" value="ECO:0000314"/>
    <property type="project" value="UniProtKB"/>
</dbReference>
<dbReference type="GO" id="GO:0031640">
    <property type="term" value="P:killing of cells of another organism"/>
    <property type="evidence" value="ECO:0007669"/>
    <property type="project" value="UniProtKB-KW"/>
</dbReference>
<dbReference type="GO" id="GO:0000272">
    <property type="term" value="P:polysaccharide catabolic process"/>
    <property type="evidence" value="ECO:0007669"/>
    <property type="project" value="UniProtKB-KW"/>
</dbReference>
<dbReference type="CDD" id="cd00325">
    <property type="entry name" value="chitinase_GH19"/>
    <property type="match status" value="1"/>
</dbReference>
<dbReference type="CDD" id="cd06921">
    <property type="entry name" value="ChtBD1_GH19_hevein"/>
    <property type="match status" value="1"/>
</dbReference>
<dbReference type="FunFam" id="3.30.60.10:FF:000001">
    <property type="entry name" value="Basic endochitinase"/>
    <property type="match status" value="1"/>
</dbReference>
<dbReference type="FunFam" id="3.30.20.10:FF:000001">
    <property type="entry name" value="Endochitinase (Chitinase)"/>
    <property type="match status" value="1"/>
</dbReference>
<dbReference type="Gene3D" id="1.10.530.10">
    <property type="match status" value="1"/>
</dbReference>
<dbReference type="Gene3D" id="3.30.20.10">
    <property type="entry name" value="Endochitinase, domain 2"/>
    <property type="match status" value="1"/>
</dbReference>
<dbReference type="Gene3D" id="3.30.60.10">
    <property type="entry name" value="Endochitinase-like"/>
    <property type="match status" value="1"/>
</dbReference>
<dbReference type="InterPro" id="IPR001002">
    <property type="entry name" value="Chitin-bd_1"/>
</dbReference>
<dbReference type="InterPro" id="IPR018371">
    <property type="entry name" value="Chitin-binding_1_CS"/>
</dbReference>
<dbReference type="InterPro" id="IPR036861">
    <property type="entry name" value="Endochitinase-like_sf"/>
</dbReference>
<dbReference type="InterPro" id="IPR016283">
    <property type="entry name" value="Glyco_hydro_19"/>
</dbReference>
<dbReference type="InterPro" id="IPR000726">
    <property type="entry name" value="Glyco_hydro_19_cat"/>
</dbReference>
<dbReference type="InterPro" id="IPR023346">
    <property type="entry name" value="Lysozyme-like_dom_sf"/>
</dbReference>
<dbReference type="PANTHER" id="PTHR22595:SF118">
    <property type="entry name" value="CHITINASE"/>
    <property type="match status" value="1"/>
</dbReference>
<dbReference type="PANTHER" id="PTHR22595">
    <property type="entry name" value="CHITINASE-RELATED"/>
    <property type="match status" value="1"/>
</dbReference>
<dbReference type="Pfam" id="PF00187">
    <property type="entry name" value="Chitin_bind_1"/>
    <property type="match status" value="1"/>
</dbReference>
<dbReference type="Pfam" id="PF00182">
    <property type="entry name" value="Glyco_hydro_19"/>
    <property type="match status" value="1"/>
</dbReference>
<dbReference type="PIRSF" id="PIRSF001060">
    <property type="entry name" value="Endochitinase"/>
    <property type="match status" value="1"/>
</dbReference>
<dbReference type="PRINTS" id="PR00451">
    <property type="entry name" value="CHITINBINDNG"/>
</dbReference>
<dbReference type="SMART" id="SM00270">
    <property type="entry name" value="ChtBD1"/>
    <property type="match status" value="1"/>
</dbReference>
<dbReference type="SUPFAM" id="SSF53955">
    <property type="entry name" value="Lysozyme-like"/>
    <property type="match status" value="1"/>
</dbReference>
<dbReference type="SUPFAM" id="SSF57016">
    <property type="entry name" value="Plant lectins/antimicrobial peptides"/>
    <property type="match status" value="1"/>
</dbReference>
<dbReference type="PROSITE" id="PS00026">
    <property type="entry name" value="CHIT_BIND_I_1"/>
    <property type="match status" value="1"/>
</dbReference>
<dbReference type="PROSITE" id="PS50941">
    <property type="entry name" value="CHIT_BIND_I_2"/>
    <property type="match status" value="1"/>
</dbReference>
<dbReference type="PROSITE" id="PS00773">
    <property type="entry name" value="CHITINASE_19_1"/>
    <property type="match status" value="1"/>
</dbReference>
<dbReference type="PROSITE" id="PS00774">
    <property type="entry name" value="CHITINASE_19_2"/>
    <property type="match status" value="1"/>
</dbReference>
<protein>
    <recommendedName>
        <fullName>Basic endochitinase A</fullName>
        <ecNumber>3.2.1.14</ecNumber>
    </recommendedName>
    <alternativeName>
        <fullName>Rye seed chitinase-a</fullName>
        <shortName>RSC-a</shortName>
    </alternativeName>
</protein>
<reference evidence="10 11" key="1">
    <citation type="journal article" date="2004" name="Biosci. Biotechnol. Biochem.">
        <title>Molecular cloning, functional expression, and mutagenesis of cDNA encoding class I chitinase from rye (Secale cereale) seeds.</title>
        <authorList>
            <person name="Ohnuma T."/>
            <person name="Taira T."/>
            <person name="Yamagami T."/>
            <person name="Aso Y."/>
            <person name="Ishiguro M."/>
        </authorList>
    </citation>
    <scope>NUCLEOTIDE SEQUENCE [MRNA]</scope>
    <scope>PROTEIN SEQUENCE OF 20-24</scope>
    <scope>FUNCTION</scope>
    <scope>CATALYTIC ACTIVITY</scope>
    <scope>MUTAGENESIS OF TRP-42 AND GLU-145</scope>
    <source>
        <tissue evidence="7">Seed</tissue>
    </source>
</reference>
<reference evidence="10" key="2">
    <citation type="journal article" date="1994" name="Biosci. Biotechnol. Biochem.">
        <title>The complete amino acid sequence of chitinase-a from the seeds of rye (Secale cereal).</title>
        <authorList>
            <person name="Yamagami T."/>
            <person name="Funatsu G."/>
        </authorList>
    </citation>
    <scope>PROTEIN SEQUENCE OF 20-321</scope>
</reference>
<reference evidence="10" key="3">
    <citation type="journal article" date="1993" name="Biosci. Biotechnol. Biochem.">
        <title>Purification and some properties of three chitinases from the seeds of rye (Secale cereale).</title>
        <authorList>
            <person name="Yamagami T."/>
            <person name="Funatsu G."/>
        </authorList>
    </citation>
    <scope>PROTEIN SEQUENCE OF 20-26</scope>
    <scope>FUNCTION</scope>
    <scope>CATALYTIC ACTIVITY</scope>
    <scope>BIOPHYSICOCHEMICAL PROPERTIES</scope>
</reference>
<reference evidence="10" key="4">
    <citation type="journal article" date="2000" name="Biosci. Biotechnol. Biochem.">
        <title>Positions of disulfide bonds in rye (Secale cereale) seed chitinase-a.</title>
        <authorList>
            <person name="Yamagami T."/>
            <person name="Funatsu G."/>
            <person name="Ishiguro M."/>
        </authorList>
    </citation>
    <scope>DISULFIDE BONDS</scope>
</reference>
<reference evidence="10" key="5">
    <citation type="journal article" date="2001" name="Biosci. Biotechnol. Biochem.">
        <title>Localization, accumulation, and antifungal activity of chitinases in rye (Secale cereale) seed.</title>
        <authorList>
            <person name="Taira T."/>
            <person name="Yamagami T."/>
            <person name="Aso Y."/>
            <person name="Ishiguro M."/>
            <person name="Ishihara M."/>
        </authorList>
    </citation>
    <scope>FUNCTION</scope>
    <scope>CATALYTIC ACTIVITY</scope>
    <scope>TISSUE SPECIFICITY</scope>
    <scope>DEVELOPMENTAL STAGE</scope>
</reference>
<reference evidence="10" key="6">
    <citation type="journal article" date="2002" name="Biosci. Biotechnol. Biochem.">
        <title>Antifungal activity of rye (Secale cereale) seed chitinases: the different binding manner of class I and class II chitinases to the fungal cell walls.</title>
        <authorList>
            <person name="Taira T."/>
            <person name="Ohnuma T."/>
            <person name="Yamagami T."/>
            <person name="Aso Y."/>
            <person name="Ishiguro M."/>
            <person name="Ishihara M."/>
        </authorList>
    </citation>
    <scope>FUNCTION</scope>
</reference>
<comment type="function">
    <text evidence="5 6 7 8">Defense against chitin-containing fungal pathogens. Binds the hyphal tips, lateral walls and septa of fungi and degrades mature chitin.</text>
</comment>
<comment type="catalytic activity">
    <reaction evidence="5 7 8">
        <text>Random endo-hydrolysis of N-acetyl-beta-D-glucosaminide (1-&gt;4)-beta-linkages in chitin and chitodextrins.</text>
        <dbReference type="EC" id="3.2.1.14"/>
    </reaction>
</comment>
<comment type="biophysicochemical properties">
    <phDependence>
        <text evidence="8">Optimum pH is about 5.0. Stable between pH 4-8.</text>
    </phDependence>
    <temperatureDependence>
        <text evidence="8">Enzyme activity is retained almost fully under 40 degrees Celsius and completely destroyed at 70 degrees Celsius. At 60 degrees Celsius the activity was over 80% compared to the untreated enzyme.</text>
    </temperatureDependence>
</comment>
<comment type="tissue specificity">
    <text evidence="5">Localized in the aleurone cells of the seed endosperm (at protein level).</text>
</comment>
<comment type="developmental stage">
    <text evidence="5">Levels increase from 23 to 40 days after flowering, and are maintained until maturation (at protein level).</text>
</comment>
<comment type="similarity">
    <text evidence="7">Belongs to the glycosyl hydrolase 19 family. Chitinase class I subfamily.</text>
</comment>
<evidence type="ECO:0000250" key="1">
    <source>
        <dbReference type="UniProtKB" id="P29022"/>
    </source>
</evidence>
<evidence type="ECO:0000255" key="2"/>
<evidence type="ECO:0000255" key="3">
    <source>
        <dbReference type="PROSITE-ProRule" id="PRU00261"/>
    </source>
</evidence>
<evidence type="ECO:0000269" key="4">
    <source>
    </source>
</evidence>
<evidence type="ECO:0000269" key="5">
    <source>
    </source>
</evidence>
<evidence type="ECO:0000269" key="6">
    <source>
    </source>
</evidence>
<evidence type="ECO:0000269" key="7">
    <source>
    </source>
</evidence>
<evidence type="ECO:0000269" key="8">
    <source>
    </source>
</evidence>
<evidence type="ECO:0000269" key="9">
    <source>
    </source>
</evidence>
<evidence type="ECO:0000305" key="10"/>
<evidence type="ECO:0000312" key="11">
    <source>
        <dbReference type="EMBL" id="BAB18519.1"/>
    </source>
</evidence>
<organism>
    <name type="scientific">Secale cereale</name>
    <name type="common">Rye</name>
    <dbReference type="NCBI Taxonomy" id="4550"/>
    <lineage>
        <taxon>Eukaryota</taxon>
        <taxon>Viridiplantae</taxon>
        <taxon>Streptophyta</taxon>
        <taxon>Embryophyta</taxon>
        <taxon>Tracheophyta</taxon>
        <taxon>Spermatophyta</taxon>
        <taxon>Magnoliopsida</taxon>
        <taxon>Liliopsida</taxon>
        <taxon>Poales</taxon>
        <taxon>Poaceae</taxon>
        <taxon>BOP clade</taxon>
        <taxon>Pooideae</taxon>
        <taxon>Triticodae</taxon>
        <taxon>Triticeae</taxon>
        <taxon>Hordeinae</taxon>
        <taxon>Secale</taxon>
    </lineage>
</organism>